<evidence type="ECO:0000255" key="1">
    <source>
        <dbReference type="HAMAP-Rule" id="MF_01225"/>
    </source>
</evidence>
<evidence type="ECO:0000255" key="2">
    <source>
        <dbReference type="PROSITE-ProRule" id="PRU01266"/>
    </source>
</evidence>
<organism>
    <name type="scientific">Synechococcus sp. (strain WH7803)</name>
    <dbReference type="NCBI Taxonomy" id="32051"/>
    <lineage>
        <taxon>Bacteria</taxon>
        <taxon>Bacillati</taxon>
        <taxon>Cyanobacteriota</taxon>
        <taxon>Cyanophyceae</taxon>
        <taxon>Synechococcales</taxon>
        <taxon>Synechococcaceae</taxon>
        <taxon>Synechococcus</taxon>
    </lineage>
</organism>
<accession>Q9EYN8</accession>
<accession>A5GPN9</accession>
<proteinExistence type="inferred from homology"/>
<sequence>MSPAPPPVDQWFRPFGVLRLSLTARCNLACPYCCPDSEELPGLMRLDQQVRLVRVACGLGVHTLRLTGGEPLLSDRLLPLLEALAAGRSNAADPLARLQEVALTTNGVLLTPEKALALRAAGLDRITVSLDALEGGVVATMAGLRGGQRAGERLVEQVLGGLSAARRAGFEPASGGLKLNAVMRRGLNDSQLLPLATLARERGVELRLIEYMDVGNRNGWAPDQVISAAEMVQRIDARWPLRPLPRESGATSRRWSYADGRGRIGTIASITEPFCGDCNRLRVTADGQAFTCLFASEGTDLRPFLHSEETLEAVVRGLWQQRRDRYSEERQGFTASAPHAEMAYLGG</sequence>
<dbReference type="EC" id="4.1.99.22" evidence="1"/>
<dbReference type="EMBL" id="AF317883">
    <property type="protein sequence ID" value="AAG45170.1"/>
    <property type="molecule type" value="Genomic_DNA"/>
</dbReference>
<dbReference type="EMBL" id="CT971583">
    <property type="protein sequence ID" value="CAK24904.1"/>
    <property type="molecule type" value="Genomic_DNA"/>
</dbReference>
<dbReference type="SMR" id="Q9EYN8"/>
<dbReference type="STRING" id="32051.SynWH7803_2478"/>
<dbReference type="KEGG" id="syx:SynWH7803_2478"/>
<dbReference type="eggNOG" id="COG2896">
    <property type="taxonomic scope" value="Bacteria"/>
</dbReference>
<dbReference type="HOGENOM" id="CLU_009273_0_1_3"/>
<dbReference type="OrthoDB" id="9763993at2"/>
<dbReference type="UniPathway" id="UPA00344"/>
<dbReference type="Proteomes" id="UP000001566">
    <property type="component" value="Chromosome"/>
</dbReference>
<dbReference type="GO" id="GO:0051539">
    <property type="term" value="F:4 iron, 4 sulfur cluster binding"/>
    <property type="evidence" value="ECO:0007669"/>
    <property type="project" value="UniProtKB-UniRule"/>
</dbReference>
<dbReference type="GO" id="GO:0061799">
    <property type="term" value="F:cyclic pyranopterin monophosphate synthase activity"/>
    <property type="evidence" value="ECO:0007669"/>
    <property type="project" value="TreeGrafter"/>
</dbReference>
<dbReference type="GO" id="GO:0061798">
    <property type="term" value="F:GTP 3',8'-cyclase activity"/>
    <property type="evidence" value="ECO:0007669"/>
    <property type="project" value="UniProtKB-UniRule"/>
</dbReference>
<dbReference type="GO" id="GO:0005525">
    <property type="term" value="F:GTP binding"/>
    <property type="evidence" value="ECO:0007669"/>
    <property type="project" value="UniProtKB-UniRule"/>
</dbReference>
<dbReference type="GO" id="GO:0046872">
    <property type="term" value="F:metal ion binding"/>
    <property type="evidence" value="ECO:0007669"/>
    <property type="project" value="UniProtKB-KW"/>
</dbReference>
<dbReference type="GO" id="GO:1904047">
    <property type="term" value="F:S-adenosyl-L-methionine binding"/>
    <property type="evidence" value="ECO:0007669"/>
    <property type="project" value="UniProtKB-UniRule"/>
</dbReference>
<dbReference type="GO" id="GO:0006777">
    <property type="term" value="P:Mo-molybdopterin cofactor biosynthetic process"/>
    <property type="evidence" value="ECO:0007669"/>
    <property type="project" value="UniProtKB-UniRule"/>
</dbReference>
<dbReference type="CDD" id="cd01335">
    <property type="entry name" value="Radical_SAM"/>
    <property type="match status" value="1"/>
</dbReference>
<dbReference type="CDD" id="cd21117">
    <property type="entry name" value="Twitch_MoaA"/>
    <property type="match status" value="1"/>
</dbReference>
<dbReference type="Gene3D" id="3.20.20.70">
    <property type="entry name" value="Aldolase class I"/>
    <property type="match status" value="1"/>
</dbReference>
<dbReference type="HAMAP" id="MF_01225_B">
    <property type="entry name" value="MoaA_B"/>
    <property type="match status" value="1"/>
</dbReference>
<dbReference type="InterPro" id="IPR013785">
    <property type="entry name" value="Aldolase_TIM"/>
</dbReference>
<dbReference type="InterPro" id="IPR013483">
    <property type="entry name" value="MoaA"/>
</dbReference>
<dbReference type="InterPro" id="IPR010505">
    <property type="entry name" value="MoaA_twitch"/>
</dbReference>
<dbReference type="InterPro" id="IPR050105">
    <property type="entry name" value="MoCo_biosynth_MoaA/MoaC"/>
</dbReference>
<dbReference type="InterPro" id="IPR007197">
    <property type="entry name" value="rSAM"/>
</dbReference>
<dbReference type="PANTHER" id="PTHR22960:SF0">
    <property type="entry name" value="MOLYBDENUM COFACTOR BIOSYNTHESIS PROTEIN 1"/>
    <property type="match status" value="1"/>
</dbReference>
<dbReference type="PANTHER" id="PTHR22960">
    <property type="entry name" value="MOLYBDOPTERIN COFACTOR SYNTHESIS PROTEIN A"/>
    <property type="match status" value="1"/>
</dbReference>
<dbReference type="Pfam" id="PF06463">
    <property type="entry name" value="Mob_synth_C"/>
    <property type="match status" value="1"/>
</dbReference>
<dbReference type="Pfam" id="PF04055">
    <property type="entry name" value="Radical_SAM"/>
    <property type="match status" value="1"/>
</dbReference>
<dbReference type="SFLD" id="SFLDG01383">
    <property type="entry name" value="cyclic_pyranopterin_phosphate"/>
    <property type="match status" value="1"/>
</dbReference>
<dbReference type="SFLD" id="SFLDS00029">
    <property type="entry name" value="Radical_SAM"/>
    <property type="match status" value="1"/>
</dbReference>
<dbReference type="SUPFAM" id="SSF102114">
    <property type="entry name" value="Radical SAM enzymes"/>
    <property type="match status" value="1"/>
</dbReference>
<dbReference type="PROSITE" id="PS51918">
    <property type="entry name" value="RADICAL_SAM"/>
    <property type="match status" value="1"/>
</dbReference>
<comment type="function">
    <text evidence="1">Catalyzes the cyclization of GTP to (8S)-3',8-cyclo-7,8-dihydroguanosine 5'-triphosphate.</text>
</comment>
<comment type="catalytic activity">
    <reaction evidence="1">
        <text>GTP + AH2 + S-adenosyl-L-methionine = (8S)-3',8-cyclo-7,8-dihydroguanosine 5'-triphosphate + 5'-deoxyadenosine + L-methionine + A + H(+)</text>
        <dbReference type="Rhea" id="RHEA:49576"/>
        <dbReference type="ChEBI" id="CHEBI:13193"/>
        <dbReference type="ChEBI" id="CHEBI:15378"/>
        <dbReference type="ChEBI" id="CHEBI:17319"/>
        <dbReference type="ChEBI" id="CHEBI:17499"/>
        <dbReference type="ChEBI" id="CHEBI:37565"/>
        <dbReference type="ChEBI" id="CHEBI:57844"/>
        <dbReference type="ChEBI" id="CHEBI:59789"/>
        <dbReference type="ChEBI" id="CHEBI:131766"/>
        <dbReference type="EC" id="4.1.99.22"/>
    </reaction>
</comment>
<comment type="cofactor">
    <cofactor evidence="1">
        <name>[4Fe-4S] cluster</name>
        <dbReference type="ChEBI" id="CHEBI:49883"/>
    </cofactor>
    <text evidence="1">Binds 2 [4Fe-4S] clusters. Binds 1 [4Fe-4S] cluster coordinated with 3 cysteines and an exchangeable S-adenosyl-L-methionine and 1 [4Fe-4S] cluster coordinated with 3 cysteines and the GTP-derived substrate.</text>
</comment>
<comment type="pathway">
    <text evidence="1">Cofactor biosynthesis; molybdopterin biosynthesis.</text>
</comment>
<comment type="subunit">
    <text evidence="1">Monomer and homodimer.</text>
</comment>
<comment type="similarity">
    <text evidence="1">Belongs to the radical SAM superfamily. MoaA family.</text>
</comment>
<gene>
    <name evidence="1" type="primary">moaA</name>
    <name type="ordered locus">SynWH7803_2478</name>
</gene>
<reference key="1">
    <citation type="submission" date="2000-10" db="EMBL/GenBank/DDBJ databases">
        <title>Characterization of nitrate utilization in marine Synechococcus sp. strain WH7803.</title>
        <authorList>
            <person name="Post A.F."/>
            <person name="Moyal A."/>
            <person name="Lindell D."/>
            <person name="Solomon S."/>
            <person name="Wang Q."/>
        </authorList>
    </citation>
    <scope>NUCLEOTIDE SEQUENCE [GENOMIC DNA]</scope>
</reference>
<reference key="2">
    <citation type="submission" date="2006-05" db="EMBL/GenBank/DDBJ databases">
        <authorList>
            <consortium name="Genoscope"/>
        </authorList>
    </citation>
    <scope>NUCLEOTIDE SEQUENCE [LARGE SCALE GENOMIC DNA]</scope>
    <source>
        <strain>WH7803</strain>
    </source>
</reference>
<protein>
    <recommendedName>
        <fullName evidence="1">GTP 3',8-cyclase</fullName>
        <ecNumber evidence="1">4.1.99.22</ecNumber>
    </recommendedName>
    <alternativeName>
        <fullName evidence="1">Molybdenum cofactor biosynthesis protein A</fullName>
    </alternativeName>
</protein>
<name>MOAA_SYNPW</name>
<keyword id="KW-0004">4Fe-4S</keyword>
<keyword id="KW-0342">GTP-binding</keyword>
<keyword id="KW-0408">Iron</keyword>
<keyword id="KW-0411">Iron-sulfur</keyword>
<keyword id="KW-0456">Lyase</keyword>
<keyword id="KW-0479">Metal-binding</keyword>
<keyword id="KW-0501">Molybdenum cofactor biosynthesis</keyword>
<keyword id="KW-0547">Nucleotide-binding</keyword>
<keyword id="KW-1185">Reference proteome</keyword>
<keyword id="KW-0949">S-adenosyl-L-methionine</keyword>
<feature type="chain" id="PRO_0000153004" description="GTP 3',8-cyclase">
    <location>
        <begin position="1"/>
        <end position="347"/>
    </location>
</feature>
<feature type="domain" description="Radical SAM core" evidence="2">
    <location>
        <begin position="12"/>
        <end position="242"/>
    </location>
</feature>
<feature type="binding site" evidence="1">
    <location>
        <position position="19"/>
    </location>
    <ligand>
        <name>GTP</name>
        <dbReference type="ChEBI" id="CHEBI:37565"/>
    </ligand>
</feature>
<feature type="binding site" evidence="1">
    <location>
        <position position="26"/>
    </location>
    <ligand>
        <name>[4Fe-4S] cluster</name>
        <dbReference type="ChEBI" id="CHEBI:49883"/>
        <label>1</label>
        <note>4Fe-4S-S-AdoMet</note>
    </ligand>
</feature>
<feature type="binding site" evidence="1">
    <location>
        <position position="30"/>
    </location>
    <ligand>
        <name>[4Fe-4S] cluster</name>
        <dbReference type="ChEBI" id="CHEBI:49883"/>
        <label>1</label>
        <note>4Fe-4S-S-AdoMet</note>
    </ligand>
</feature>
<feature type="binding site" evidence="1">
    <location>
        <position position="32"/>
    </location>
    <ligand>
        <name>S-adenosyl-L-methionine</name>
        <dbReference type="ChEBI" id="CHEBI:59789"/>
    </ligand>
</feature>
<feature type="binding site" evidence="1">
    <location>
        <position position="33"/>
    </location>
    <ligand>
        <name>[4Fe-4S] cluster</name>
        <dbReference type="ChEBI" id="CHEBI:49883"/>
        <label>1</label>
        <note>4Fe-4S-S-AdoMet</note>
    </ligand>
</feature>
<feature type="binding site" evidence="1">
    <location>
        <position position="65"/>
    </location>
    <ligand>
        <name>GTP</name>
        <dbReference type="ChEBI" id="CHEBI:37565"/>
    </ligand>
</feature>
<feature type="binding site" evidence="1">
    <location>
        <position position="69"/>
    </location>
    <ligand>
        <name>S-adenosyl-L-methionine</name>
        <dbReference type="ChEBI" id="CHEBI:59789"/>
    </ligand>
</feature>
<feature type="binding site" evidence="1">
    <location>
        <position position="104"/>
    </location>
    <ligand>
        <name>GTP</name>
        <dbReference type="ChEBI" id="CHEBI:37565"/>
    </ligand>
</feature>
<feature type="binding site" evidence="1">
    <location>
        <position position="129"/>
    </location>
    <ligand>
        <name>S-adenosyl-L-methionine</name>
        <dbReference type="ChEBI" id="CHEBI:59789"/>
    </ligand>
</feature>
<feature type="binding site" evidence="1">
    <location>
        <position position="178"/>
    </location>
    <ligand>
        <name>GTP</name>
        <dbReference type="ChEBI" id="CHEBI:37565"/>
    </ligand>
</feature>
<feature type="binding site" evidence="1">
    <location>
        <position position="212"/>
    </location>
    <ligand>
        <name>S-adenosyl-L-methionine</name>
        <dbReference type="ChEBI" id="CHEBI:59789"/>
    </ligand>
</feature>
<feature type="binding site" evidence="1">
    <location>
        <position position="275"/>
    </location>
    <ligand>
        <name>[4Fe-4S] cluster</name>
        <dbReference type="ChEBI" id="CHEBI:49883"/>
        <label>2</label>
        <note>4Fe-4S-substrate</note>
    </ligand>
</feature>
<feature type="binding site" evidence="1">
    <location>
        <position position="278"/>
    </location>
    <ligand>
        <name>[4Fe-4S] cluster</name>
        <dbReference type="ChEBI" id="CHEBI:49883"/>
        <label>2</label>
        <note>4Fe-4S-substrate</note>
    </ligand>
</feature>
<feature type="binding site" evidence="1">
    <location>
        <begin position="280"/>
        <end position="282"/>
    </location>
    <ligand>
        <name>GTP</name>
        <dbReference type="ChEBI" id="CHEBI:37565"/>
    </ligand>
</feature>
<feature type="binding site" evidence="1">
    <location>
        <position position="292"/>
    </location>
    <ligand>
        <name>[4Fe-4S] cluster</name>
        <dbReference type="ChEBI" id="CHEBI:49883"/>
        <label>2</label>
        <note>4Fe-4S-substrate</note>
    </ligand>
</feature>